<reference key="1">
    <citation type="submission" date="2006-08" db="EMBL/GenBank/DDBJ databases">
        <title>Complete sequence of chromosome 1 of Burkholderia cepacia AMMD.</title>
        <authorList>
            <person name="Copeland A."/>
            <person name="Lucas S."/>
            <person name="Lapidus A."/>
            <person name="Barry K."/>
            <person name="Detter J.C."/>
            <person name="Glavina del Rio T."/>
            <person name="Hammon N."/>
            <person name="Israni S."/>
            <person name="Pitluck S."/>
            <person name="Bruce D."/>
            <person name="Chain P."/>
            <person name="Malfatti S."/>
            <person name="Shin M."/>
            <person name="Vergez L."/>
            <person name="Schmutz J."/>
            <person name="Larimer F."/>
            <person name="Land M."/>
            <person name="Hauser L."/>
            <person name="Kyrpides N."/>
            <person name="Kim E."/>
            <person name="Parke J."/>
            <person name="Coenye T."/>
            <person name="Konstantinidis K."/>
            <person name="Ramette A."/>
            <person name="Tiedje J."/>
            <person name="Richardson P."/>
        </authorList>
    </citation>
    <scope>NUCLEOTIDE SEQUENCE [LARGE SCALE GENOMIC DNA]</scope>
    <source>
        <strain>ATCC BAA-244 / DSM 16087 / CCUG 44356 / LMG 19182 / AMMD</strain>
    </source>
</reference>
<accession>Q0BDL0</accession>
<protein>
    <recommendedName>
        <fullName evidence="1">Imidazolonepropionase</fullName>
        <ecNumber evidence="1">3.5.2.7</ecNumber>
    </recommendedName>
    <alternativeName>
        <fullName evidence="1">Imidazolone-5-propionate hydrolase</fullName>
    </alternativeName>
</protein>
<dbReference type="EC" id="3.5.2.7" evidence="1"/>
<dbReference type="EMBL" id="CP000440">
    <property type="protein sequence ID" value="ABI87763.1"/>
    <property type="molecule type" value="Genomic_DNA"/>
</dbReference>
<dbReference type="RefSeq" id="WP_011657416.1">
    <property type="nucleotide sequence ID" value="NC_008390.1"/>
</dbReference>
<dbReference type="SMR" id="Q0BDL0"/>
<dbReference type="GeneID" id="93085590"/>
<dbReference type="KEGG" id="bam:Bamb_2207"/>
<dbReference type="PATRIC" id="fig|339670.21.peg.2727"/>
<dbReference type="eggNOG" id="COG1228">
    <property type="taxonomic scope" value="Bacteria"/>
</dbReference>
<dbReference type="UniPathway" id="UPA00379">
    <property type="reaction ID" value="UER00551"/>
</dbReference>
<dbReference type="Proteomes" id="UP000000662">
    <property type="component" value="Chromosome 1"/>
</dbReference>
<dbReference type="GO" id="GO:0005737">
    <property type="term" value="C:cytoplasm"/>
    <property type="evidence" value="ECO:0007669"/>
    <property type="project" value="UniProtKB-SubCell"/>
</dbReference>
<dbReference type="GO" id="GO:0050480">
    <property type="term" value="F:imidazolonepropionase activity"/>
    <property type="evidence" value="ECO:0007669"/>
    <property type="project" value="UniProtKB-UniRule"/>
</dbReference>
<dbReference type="GO" id="GO:0005506">
    <property type="term" value="F:iron ion binding"/>
    <property type="evidence" value="ECO:0007669"/>
    <property type="project" value="UniProtKB-UniRule"/>
</dbReference>
<dbReference type="GO" id="GO:0008270">
    <property type="term" value="F:zinc ion binding"/>
    <property type="evidence" value="ECO:0007669"/>
    <property type="project" value="UniProtKB-UniRule"/>
</dbReference>
<dbReference type="GO" id="GO:0019556">
    <property type="term" value="P:L-histidine catabolic process to glutamate and formamide"/>
    <property type="evidence" value="ECO:0007669"/>
    <property type="project" value="UniProtKB-UniPathway"/>
</dbReference>
<dbReference type="GO" id="GO:0019557">
    <property type="term" value="P:L-histidine catabolic process to glutamate and formate"/>
    <property type="evidence" value="ECO:0007669"/>
    <property type="project" value="UniProtKB-UniPathway"/>
</dbReference>
<dbReference type="CDD" id="cd01296">
    <property type="entry name" value="Imidazolone-5PH"/>
    <property type="match status" value="1"/>
</dbReference>
<dbReference type="FunFam" id="3.20.20.140:FF:000007">
    <property type="entry name" value="Imidazolonepropionase"/>
    <property type="match status" value="1"/>
</dbReference>
<dbReference type="Gene3D" id="3.20.20.140">
    <property type="entry name" value="Metal-dependent hydrolases"/>
    <property type="match status" value="1"/>
</dbReference>
<dbReference type="Gene3D" id="2.30.40.10">
    <property type="entry name" value="Urease, subunit C, domain 1"/>
    <property type="match status" value="1"/>
</dbReference>
<dbReference type="HAMAP" id="MF_00372">
    <property type="entry name" value="HutI"/>
    <property type="match status" value="1"/>
</dbReference>
<dbReference type="InterPro" id="IPR006680">
    <property type="entry name" value="Amidohydro-rel"/>
</dbReference>
<dbReference type="InterPro" id="IPR005920">
    <property type="entry name" value="HutI"/>
</dbReference>
<dbReference type="InterPro" id="IPR011059">
    <property type="entry name" value="Metal-dep_hydrolase_composite"/>
</dbReference>
<dbReference type="InterPro" id="IPR032466">
    <property type="entry name" value="Metal_Hydrolase"/>
</dbReference>
<dbReference type="NCBIfam" id="TIGR01224">
    <property type="entry name" value="hutI"/>
    <property type="match status" value="1"/>
</dbReference>
<dbReference type="PANTHER" id="PTHR42752">
    <property type="entry name" value="IMIDAZOLONEPROPIONASE"/>
    <property type="match status" value="1"/>
</dbReference>
<dbReference type="PANTHER" id="PTHR42752:SF1">
    <property type="entry name" value="IMIDAZOLONEPROPIONASE-RELATED"/>
    <property type="match status" value="1"/>
</dbReference>
<dbReference type="Pfam" id="PF01979">
    <property type="entry name" value="Amidohydro_1"/>
    <property type="match status" value="1"/>
</dbReference>
<dbReference type="SUPFAM" id="SSF51338">
    <property type="entry name" value="Composite domain of metallo-dependent hydrolases"/>
    <property type="match status" value="1"/>
</dbReference>
<dbReference type="SUPFAM" id="SSF51556">
    <property type="entry name" value="Metallo-dependent hydrolases"/>
    <property type="match status" value="1"/>
</dbReference>
<proteinExistence type="inferred from homology"/>
<keyword id="KW-0963">Cytoplasm</keyword>
<keyword id="KW-0369">Histidine metabolism</keyword>
<keyword id="KW-0378">Hydrolase</keyword>
<keyword id="KW-0408">Iron</keyword>
<keyword id="KW-0479">Metal-binding</keyword>
<keyword id="KW-0862">Zinc</keyword>
<gene>
    <name evidence="1" type="primary">hutI</name>
    <name type="ordered locus">Bamb_2207</name>
</gene>
<comment type="function">
    <text evidence="1">Catalyzes the hydrolytic cleavage of the carbon-nitrogen bond in imidazolone-5-propanoate to yield N-formimidoyl-L-glutamate. It is the third step in the universal histidine degradation pathway.</text>
</comment>
<comment type="catalytic activity">
    <reaction evidence="1">
        <text>4-imidazolone-5-propanoate + H2O = N-formimidoyl-L-glutamate</text>
        <dbReference type="Rhea" id="RHEA:23660"/>
        <dbReference type="ChEBI" id="CHEBI:15377"/>
        <dbReference type="ChEBI" id="CHEBI:58928"/>
        <dbReference type="ChEBI" id="CHEBI:77893"/>
        <dbReference type="EC" id="3.5.2.7"/>
    </reaction>
</comment>
<comment type="cofactor">
    <cofactor evidence="1">
        <name>Zn(2+)</name>
        <dbReference type="ChEBI" id="CHEBI:29105"/>
    </cofactor>
    <cofactor evidence="1">
        <name>Fe(3+)</name>
        <dbReference type="ChEBI" id="CHEBI:29034"/>
    </cofactor>
    <text evidence="1">Binds 1 zinc or iron ion per subunit.</text>
</comment>
<comment type="pathway">
    <text evidence="1">Amino-acid degradation; L-histidine degradation into L-glutamate; N-formimidoyl-L-glutamate from L-histidine: step 3/3.</text>
</comment>
<comment type="subcellular location">
    <subcellularLocation>
        <location evidence="1">Cytoplasm</location>
    </subcellularLocation>
</comment>
<comment type="similarity">
    <text evidence="1">Belongs to the metallo-dependent hydrolases superfamily. HutI family.</text>
</comment>
<organism>
    <name type="scientific">Burkholderia ambifaria (strain ATCC BAA-244 / DSM 16087 / CCUG 44356 / LMG 19182 / AMMD)</name>
    <name type="common">Burkholderia cepacia (strain AMMD)</name>
    <dbReference type="NCBI Taxonomy" id="339670"/>
    <lineage>
        <taxon>Bacteria</taxon>
        <taxon>Pseudomonadati</taxon>
        <taxon>Pseudomonadota</taxon>
        <taxon>Betaproteobacteria</taxon>
        <taxon>Burkholderiales</taxon>
        <taxon>Burkholderiaceae</taxon>
        <taxon>Burkholderia</taxon>
        <taxon>Burkholderia cepacia complex</taxon>
    </lineage>
</organism>
<sequence>MKPTVWHHLRLCPHGHPDETLDDAAIAVDETGTIVWLGAFSALPHGYAHWQREDLHGAWVTPGLVDCHTHLVYGGTRADEFAQRLAGVSYEEIARQGGGIVSTVRATRAADETTLFVQAAARLQPLLAEGVSAIEIKSGYGLDLASERKMLRVARQLGERFPVSVYTTFLGAHALPPEYAGRADEYIDEVCERMLPTLADEGLVDAVDVFCERIGFSLAQTERVFEAATRRGLPVKLHAEQLSNAGGTALAARYRALSADHLEFLDEAGIEAMKAAGTVAVLLPGAYYFIRETQLPPIELLRKHGVPIALATDHNPGTSPLESLLLTLNMGCTLFRMTVPEVLQGVTRHAAAALGRADRHGALEIGRQADFAVWSVGSLAELAYWIGRPLCEQVVRGGATVFRRMNG</sequence>
<feature type="chain" id="PRO_0000306448" description="Imidazolonepropionase">
    <location>
        <begin position="1"/>
        <end position="407"/>
    </location>
</feature>
<feature type="binding site" evidence="1">
    <location>
        <position position="68"/>
    </location>
    <ligand>
        <name>Fe(3+)</name>
        <dbReference type="ChEBI" id="CHEBI:29034"/>
    </ligand>
</feature>
<feature type="binding site" evidence="1">
    <location>
        <position position="68"/>
    </location>
    <ligand>
        <name>Zn(2+)</name>
        <dbReference type="ChEBI" id="CHEBI:29105"/>
    </ligand>
</feature>
<feature type="binding site" evidence="1">
    <location>
        <position position="70"/>
    </location>
    <ligand>
        <name>Fe(3+)</name>
        <dbReference type="ChEBI" id="CHEBI:29034"/>
    </ligand>
</feature>
<feature type="binding site" evidence="1">
    <location>
        <position position="70"/>
    </location>
    <ligand>
        <name>Zn(2+)</name>
        <dbReference type="ChEBI" id="CHEBI:29105"/>
    </ligand>
</feature>
<feature type="binding site" evidence="1">
    <location>
        <position position="77"/>
    </location>
    <ligand>
        <name>4-imidazolone-5-propanoate</name>
        <dbReference type="ChEBI" id="CHEBI:77893"/>
    </ligand>
</feature>
<feature type="binding site" evidence="1">
    <location>
        <position position="140"/>
    </location>
    <ligand>
        <name>4-imidazolone-5-propanoate</name>
        <dbReference type="ChEBI" id="CHEBI:77893"/>
    </ligand>
</feature>
<feature type="binding site" evidence="1">
    <location>
        <position position="140"/>
    </location>
    <ligand>
        <name>N-formimidoyl-L-glutamate</name>
        <dbReference type="ChEBI" id="CHEBI:58928"/>
    </ligand>
</feature>
<feature type="binding site" evidence="1">
    <location>
        <position position="173"/>
    </location>
    <ligand>
        <name>4-imidazolone-5-propanoate</name>
        <dbReference type="ChEBI" id="CHEBI:77893"/>
    </ligand>
</feature>
<feature type="binding site" evidence="1">
    <location>
        <position position="238"/>
    </location>
    <ligand>
        <name>Fe(3+)</name>
        <dbReference type="ChEBI" id="CHEBI:29034"/>
    </ligand>
</feature>
<feature type="binding site" evidence="1">
    <location>
        <position position="238"/>
    </location>
    <ligand>
        <name>Zn(2+)</name>
        <dbReference type="ChEBI" id="CHEBI:29105"/>
    </ligand>
</feature>
<feature type="binding site" evidence="1">
    <location>
        <position position="241"/>
    </location>
    <ligand>
        <name>4-imidazolone-5-propanoate</name>
        <dbReference type="ChEBI" id="CHEBI:77893"/>
    </ligand>
</feature>
<feature type="binding site" evidence="1">
    <location>
        <position position="313"/>
    </location>
    <ligand>
        <name>Fe(3+)</name>
        <dbReference type="ChEBI" id="CHEBI:29034"/>
    </ligand>
</feature>
<feature type="binding site" evidence="1">
    <location>
        <position position="313"/>
    </location>
    <ligand>
        <name>Zn(2+)</name>
        <dbReference type="ChEBI" id="CHEBI:29105"/>
    </ligand>
</feature>
<feature type="binding site" evidence="1">
    <location>
        <position position="315"/>
    </location>
    <ligand>
        <name>N-formimidoyl-L-glutamate</name>
        <dbReference type="ChEBI" id="CHEBI:58928"/>
    </ligand>
</feature>
<feature type="binding site" evidence="1">
    <location>
        <position position="317"/>
    </location>
    <ligand>
        <name>N-formimidoyl-L-glutamate</name>
        <dbReference type="ChEBI" id="CHEBI:58928"/>
    </ligand>
</feature>
<feature type="binding site" evidence="1">
    <location>
        <position position="318"/>
    </location>
    <ligand>
        <name>4-imidazolone-5-propanoate</name>
        <dbReference type="ChEBI" id="CHEBI:77893"/>
    </ligand>
</feature>
<evidence type="ECO:0000255" key="1">
    <source>
        <dbReference type="HAMAP-Rule" id="MF_00372"/>
    </source>
</evidence>
<name>HUTI_BURCM</name>